<accession>Q92BQ4</accession>
<sequence>MPKILVDADACPVKAEIKQVAEQFQLDVIFVASFNHYSVNTNGENWIFVDTGKESADMRMMNLANKGDIIVTQDIGLASILLAKGTYVFSNRGELYREEEMSLMLDIRYRHAKERQQGKYSKGPKAMSDQDRVLFKDRMTTFFKNK</sequence>
<name>Y1493_LISIN</name>
<evidence type="ECO:0000255" key="1">
    <source>
        <dbReference type="HAMAP-Rule" id="MF_00489"/>
    </source>
</evidence>
<proteinExistence type="inferred from homology"/>
<protein>
    <recommendedName>
        <fullName evidence="1">UPF0178 protein Lin1493</fullName>
    </recommendedName>
</protein>
<feature type="chain" id="PRO_0000175988" description="UPF0178 protein Lin1493">
    <location>
        <begin position="1"/>
        <end position="146"/>
    </location>
</feature>
<comment type="similarity">
    <text evidence="1">Belongs to the UPF0178 family.</text>
</comment>
<dbReference type="EMBL" id="AL596168">
    <property type="protein sequence ID" value="CAC96724.1"/>
    <property type="molecule type" value="Genomic_DNA"/>
</dbReference>
<dbReference type="PIR" id="AD1619">
    <property type="entry name" value="AD1619"/>
</dbReference>
<dbReference type="RefSeq" id="WP_003762282.1">
    <property type="nucleotide sequence ID" value="NC_003212.1"/>
</dbReference>
<dbReference type="STRING" id="272626.gene:17565824"/>
<dbReference type="KEGG" id="lin:lin1493"/>
<dbReference type="eggNOG" id="COG1671">
    <property type="taxonomic scope" value="Bacteria"/>
</dbReference>
<dbReference type="HOGENOM" id="CLU_106619_0_0_9"/>
<dbReference type="OrthoDB" id="9798918at2"/>
<dbReference type="Proteomes" id="UP000002513">
    <property type="component" value="Chromosome"/>
</dbReference>
<dbReference type="CDD" id="cd18720">
    <property type="entry name" value="PIN_YqxD-like"/>
    <property type="match status" value="1"/>
</dbReference>
<dbReference type="HAMAP" id="MF_00489">
    <property type="entry name" value="UPF0178"/>
    <property type="match status" value="1"/>
</dbReference>
<dbReference type="InterPro" id="IPR003791">
    <property type="entry name" value="UPF0178"/>
</dbReference>
<dbReference type="PANTHER" id="PTHR35146">
    <property type="entry name" value="UPF0178 PROTEIN YAII"/>
    <property type="match status" value="1"/>
</dbReference>
<dbReference type="PANTHER" id="PTHR35146:SF1">
    <property type="entry name" value="UPF0178 PROTEIN YAII"/>
    <property type="match status" value="1"/>
</dbReference>
<dbReference type="Pfam" id="PF02639">
    <property type="entry name" value="DUF188"/>
    <property type="match status" value="1"/>
</dbReference>
<reference key="1">
    <citation type="journal article" date="2001" name="Science">
        <title>Comparative genomics of Listeria species.</title>
        <authorList>
            <person name="Glaser P."/>
            <person name="Frangeul L."/>
            <person name="Buchrieser C."/>
            <person name="Rusniok C."/>
            <person name="Amend A."/>
            <person name="Baquero F."/>
            <person name="Berche P."/>
            <person name="Bloecker H."/>
            <person name="Brandt P."/>
            <person name="Chakraborty T."/>
            <person name="Charbit A."/>
            <person name="Chetouani F."/>
            <person name="Couve E."/>
            <person name="de Daruvar A."/>
            <person name="Dehoux P."/>
            <person name="Domann E."/>
            <person name="Dominguez-Bernal G."/>
            <person name="Duchaud E."/>
            <person name="Durant L."/>
            <person name="Dussurget O."/>
            <person name="Entian K.-D."/>
            <person name="Fsihi H."/>
            <person name="Garcia-del Portillo F."/>
            <person name="Garrido P."/>
            <person name="Gautier L."/>
            <person name="Goebel W."/>
            <person name="Gomez-Lopez N."/>
            <person name="Hain T."/>
            <person name="Hauf J."/>
            <person name="Jackson D."/>
            <person name="Jones L.-M."/>
            <person name="Kaerst U."/>
            <person name="Kreft J."/>
            <person name="Kuhn M."/>
            <person name="Kunst F."/>
            <person name="Kurapkat G."/>
            <person name="Madueno E."/>
            <person name="Maitournam A."/>
            <person name="Mata Vicente J."/>
            <person name="Ng E."/>
            <person name="Nedjari H."/>
            <person name="Nordsiek G."/>
            <person name="Novella S."/>
            <person name="de Pablos B."/>
            <person name="Perez-Diaz J.-C."/>
            <person name="Purcell R."/>
            <person name="Remmel B."/>
            <person name="Rose M."/>
            <person name="Schlueter T."/>
            <person name="Simoes N."/>
            <person name="Tierrez A."/>
            <person name="Vazquez-Boland J.-A."/>
            <person name="Voss H."/>
            <person name="Wehland J."/>
            <person name="Cossart P."/>
        </authorList>
    </citation>
    <scope>NUCLEOTIDE SEQUENCE [LARGE SCALE GENOMIC DNA]</scope>
    <source>
        <strain>ATCC BAA-680 / CLIP 11262</strain>
    </source>
</reference>
<organism>
    <name type="scientific">Listeria innocua serovar 6a (strain ATCC BAA-680 / CLIP 11262)</name>
    <dbReference type="NCBI Taxonomy" id="272626"/>
    <lineage>
        <taxon>Bacteria</taxon>
        <taxon>Bacillati</taxon>
        <taxon>Bacillota</taxon>
        <taxon>Bacilli</taxon>
        <taxon>Bacillales</taxon>
        <taxon>Listeriaceae</taxon>
        <taxon>Listeria</taxon>
    </lineage>
</organism>
<gene>
    <name type="ordered locus">lin1493</name>
</gene>